<comment type="function">
    <text evidence="1">Specifically catalyzes the NAD or NADP-dependent dehydrogenation of L-aspartate to iminoaspartate.</text>
</comment>
<comment type="catalytic activity">
    <reaction evidence="1">
        <text>L-aspartate + NADP(+) + H2O = oxaloacetate + NH4(+) + NADPH + H(+)</text>
        <dbReference type="Rhea" id="RHEA:11784"/>
        <dbReference type="ChEBI" id="CHEBI:15377"/>
        <dbReference type="ChEBI" id="CHEBI:15378"/>
        <dbReference type="ChEBI" id="CHEBI:16452"/>
        <dbReference type="ChEBI" id="CHEBI:28938"/>
        <dbReference type="ChEBI" id="CHEBI:29991"/>
        <dbReference type="ChEBI" id="CHEBI:57783"/>
        <dbReference type="ChEBI" id="CHEBI:58349"/>
        <dbReference type="EC" id="1.4.1.21"/>
    </reaction>
</comment>
<comment type="catalytic activity">
    <reaction evidence="1">
        <text>L-aspartate + NAD(+) + H2O = oxaloacetate + NH4(+) + NADH + H(+)</text>
        <dbReference type="Rhea" id="RHEA:11788"/>
        <dbReference type="ChEBI" id="CHEBI:15377"/>
        <dbReference type="ChEBI" id="CHEBI:15378"/>
        <dbReference type="ChEBI" id="CHEBI:16452"/>
        <dbReference type="ChEBI" id="CHEBI:28938"/>
        <dbReference type="ChEBI" id="CHEBI:29991"/>
        <dbReference type="ChEBI" id="CHEBI:57540"/>
        <dbReference type="ChEBI" id="CHEBI:57945"/>
        <dbReference type="EC" id="1.4.1.21"/>
    </reaction>
</comment>
<comment type="pathway">
    <text evidence="1">Cofactor biosynthesis; NAD(+) biosynthesis; iminoaspartate from L-aspartate (dehydrogenase route): step 1/1.</text>
</comment>
<comment type="miscellaneous">
    <text evidence="1">The iminoaspartate product is unstable in aqueous solution and can decompose to oxaloacetate and ammonia.</text>
</comment>
<comment type="similarity">
    <text evidence="1">Belongs to the L-aspartate dehydrogenase family.</text>
</comment>
<feature type="chain" id="PRO_0000144880" description="L-aspartate dehydrogenase 1">
    <location>
        <begin position="1"/>
        <end position="258"/>
    </location>
</feature>
<feature type="active site" evidence="1">
    <location>
        <position position="211"/>
    </location>
</feature>
<feature type="binding site" evidence="1">
    <location>
        <position position="121"/>
    </location>
    <ligand>
        <name>NAD(+)</name>
        <dbReference type="ChEBI" id="CHEBI:57540"/>
    </ligand>
</feature>
<feature type="binding site" evidence="1">
    <location>
        <position position="181"/>
    </location>
    <ligand>
        <name>NAD(+)</name>
        <dbReference type="ChEBI" id="CHEBI:57540"/>
    </ligand>
</feature>
<proteinExistence type="inferred from homology"/>
<organism>
    <name type="scientific">Bordetella bronchiseptica (strain ATCC BAA-588 / NCTC 13252 / RB50)</name>
    <name type="common">Alcaligenes bronchisepticus</name>
    <dbReference type="NCBI Taxonomy" id="257310"/>
    <lineage>
        <taxon>Bacteria</taxon>
        <taxon>Pseudomonadati</taxon>
        <taxon>Pseudomonadota</taxon>
        <taxon>Betaproteobacteria</taxon>
        <taxon>Burkholderiales</taxon>
        <taxon>Alcaligenaceae</taxon>
        <taxon>Bordetella</taxon>
    </lineage>
</organism>
<sequence length="258" mass="26330">MNTPLRVGIVGCGVLANAMAGHLARQPRPVEIVGCLVRDPGRARGALPCHGSWEALLAQRPEVVVECAGQAALAQYAQVILAAGVDLVPASVGALADDALRGALLEAAAAAGARIRIPSGAMVGIDGLAAARHVGVAEVLYRGTMPPVALQRYVSGPLPERGLAFAGSAREAVARFPKNANLTGTIALAGIGFDRTRVEMLIDPDATANVHELLARGEFGDFHARVSGLRISESSPSSRIVAGSLAQAALGSGFLALS</sequence>
<dbReference type="EC" id="1.4.1.21" evidence="1"/>
<dbReference type="EMBL" id="BX640437">
    <property type="protein sequence ID" value="CAE30758.1"/>
    <property type="molecule type" value="Genomic_DNA"/>
</dbReference>
<dbReference type="RefSeq" id="WP_003807325.1">
    <property type="nucleotide sequence ID" value="NC_002927.3"/>
</dbReference>
<dbReference type="SMR" id="Q7WQR6"/>
<dbReference type="KEGG" id="bbr:BB0260"/>
<dbReference type="eggNOG" id="COG1712">
    <property type="taxonomic scope" value="Bacteria"/>
</dbReference>
<dbReference type="HOGENOM" id="CLU_089550_0_0_4"/>
<dbReference type="UniPathway" id="UPA00253">
    <property type="reaction ID" value="UER00456"/>
</dbReference>
<dbReference type="Proteomes" id="UP000001027">
    <property type="component" value="Chromosome"/>
</dbReference>
<dbReference type="GO" id="GO:0033735">
    <property type="term" value="F:aspartate dehydrogenase activity"/>
    <property type="evidence" value="ECO:0007669"/>
    <property type="project" value="UniProtKB-EC"/>
</dbReference>
<dbReference type="GO" id="GO:0051287">
    <property type="term" value="F:NAD binding"/>
    <property type="evidence" value="ECO:0007669"/>
    <property type="project" value="UniProtKB-UniRule"/>
</dbReference>
<dbReference type="GO" id="GO:0050661">
    <property type="term" value="F:NADP binding"/>
    <property type="evidence" value="ECO:0007669"/>
    <property type="project" value="UniProtKB-UniRule"/>
</dbReference>
<dbReference type="GO" id="GO:0016639">
    <property type="term" value="F:oxidoreductase activity, acting on the CH-NH2 group of donors, NAD or NADP as acceptor"/>
    <property type="evidence" value="ECO:0007669"/>
    <property type="project" value="UniProtKB-UniRule"/>
</dbReference>
<dbReference type="GO" id="GO:0009435">
    <property type="term" value="P:NAD biosynthetic process"/>
    <property type="evidence" value="ECO:0007669"/>
    <property type="project" value="UniProtKB-UniRule"/>
</dbReference>
<dbReference type="Gene3D" id="3.30.360.10">
    <property type="entry name" value="Dihydrodipicolinate Reductase, domain 2"/>
    <property type="match status" value="1"/>
</dbReference>
<dbReference type="Gene3D" id="3.40.50.720">
    <property type="entry name" value="NAD(P)-binding Rossmann-like Domain"/>
    <property type="match status" value="1"/>
</dbReference>
<dbReference type="HAMAP" id="MF_01265">
    <property type="entry name" value="NadX"/>
    <property type="match status" value="1"/>
</dbReference>
<dbReference type="InterPro" id="IPR005106">
    <property type="entry name" value="Asp/hSer_DH_NAD-bd"/>
</dbReference>
<dbReference type="InterPro" id="IPR002811">
    <property type="entry name" value="Asp_DH"/>
</dbReference>
<dbReference type="InterPro" id="IPR020626">
    <property type="entry name" value="Asp_DH_prok"/>
</dbReference>
<dbReference type="InterPro" id="IPR011182">
    <property type="entry name" value="L-Asp_DH"/>
</dbReference>
<dbReference type="InterPro" id="IPR036291">
    <property type="entry name" value="NAD(P)-bd_dom_sf"/>
</dbReference>
<dbReference type="NCBIfam" id="NF009828">
    <property type="entry name" value="PRK13303.1-3"/>
    <property type="match status" value="1"/>
</dbReference>
<dbReference type="NCBIfam" id="NF009829">
    <property type="entry name" value="PRK13303.1-4"/>
    <property type="match status" value="1"/>
</dbReference>
<dbReference type="PANTHER" id="PTHR31873:SF6">
    <property type="entry name" value="ASPARTATE DEHYDROGENASE DOMAIN-CONTAINING PROTEIN"/>
    <property type="match status" value="1"/>
</dbReference>
<dbReference type="PANTHER" id="PTHR31873">
    <property type="entry name" value="L-ASPARTATE DEHYDROGENASE-RELATED"/>
    <property type="match status" value="1"/>
</dbReference>
<dbReference type="Pfam" id="PF01958">
    <property type="entry name" value="Asp_DH_C"/>
    <property type="match status" value="1"/>
</dbReference>
<dbReference type="Pfam" id="PF03447">
    <property type="entry name" value="NAD_binding_3"/>
    <property type="match status" value="1"/>
</dbReference>
<dbReference type="PIRSF" id="PIRSF005227">
    <property type="entry name" value="Asp_dh_NAD_syn"/>
    <property type="match status" value="1"/>
</dbReference>
<dbReference type="SUPFAM" id="SSF55347">
    <property type="entry name" value="Glyceraldehyde-3-phosphate dehydrogenase-like, C-terminal domain"/>
    <property type="match status" value="1"/>
</dbReference>
<dbReference type="SUPFAM" id="SSF51735">
    <property type="entry name" value="NAD(P)-binding Rossmann-fold domains"/>
    <property type="match status" value="1"/>
</dbReference>
<gene>
    <name evidence="1" type="primary">nadX1</name>
    <name type="ordered locus">BB0260</name>
</gene>
<protein>
    <recommendedName>
        <fullName evidence="1">L-aspartate dehydrogenase 1</fullName>
        <ecNumber evidence="1">1.4.1.21</ecNumber>
    </recommendedName>
</protein>
<name>ASPD1_BORBR</name>
<accession>Q7WQR6</accession>
<reference key="1">
    <citation type="journal article" date="2003" name="Nat. Genet.">
        <title>Comparative analysis of the genome sequences of Bordetella pertussis, Bordetella parapertussis and Bordetella bronchiseptica.</title>
        <authorList>
            <person name="Parkhill J."/>
            <person name="Sebaihia M."/>
            <person name="Preston A."/>
            <person name="Murphy L.D."/>
            <person name="Thomson N.R."/>
            <person name="Harris D.E."/>
            <person name="Holden M.T.G."/>
            <person name="Churcher C.M."/>
            <person name="Bentley S.D."/>
            <person name="Mungall K.L."/>
            <person name="Cerdeno-Tarraga A.-M."/>
            <person name="Temple L."/>
            <person name="James K.D."/>
            <person name="Harris B."/>
            <person name="Quail M.A."/>
            <person name="Achtman M."/>
            <person name="Atkin R."/>
            <person name="Baker S."/>
            <person name="Basham D."/>
            <person name="Bason N."/>
            <person name="Cherevach I."/>
            <person name="Chillingworth T."/>
            <person name="Collins M."/>
            <person name="Cronin A."/>
            <person name="Davis P."/>
            <person name="Doggett J."/>
            <person name="Feltwell T."/>
            <person name="Goble A."/>
            <person name="Hamlin N."/>
            <person name="Hauser H."/>
            <person name="Holroyd S."/>
            <person name="Jagels K."/>
            <person name="Leather S."/>
            <person name="Moule S."/>
            <person name="Norberczak H."/>
            <person name="O'Neil S."/>
            <person name="Ormond D."/>
            <person name="Price C."/>
            <person name="Rabbinowitsch E."/>
            <person name="Rutter S."/>
            <person name="Sanders M."/>
            <person name="Saunders D."/>
            <person name="Seeger K."/>
            <person name="Sharp S."/>
            <person name="Simmonds M."/>
            <person name="Skelton J."/>
            <person name="Squares R."/>
            <person name="Squares S."/>
            <person name="Stevens K."/>
            <person name="Unwin L."/>
            <person name="Whitehead S."/>
            <person name="Barrell B.G."/>
            <person name="Maskell D.J."/>
        </authorList>
    </citation>
    <scope>NUCLEOTIDE SEQUENCE [LARGE SCALE GENOMIC DNA]</scope>
    <source>
        <strain>ATCC BAA-588 / NCTC 13252 / RB50</strain>
    </source>
</reference>
<evidence type="ECO:0000255" key="1">
    <source>
        <dbReference type="HAMAP-Rule" id="MF_01265"/>
    </source>
</evidence>
<keyword id="KW-0520">NAD</keyword>
<keyword id="KW-0521">NADP</keyword>
<keyword id="KW-0560">Oxidoreductase</keyword>
<keyword id="KW-0662">Pyridine nucleotide biosynthesis</keyword>